<feature type="chain" id="PRO_1000123907" description="Probable protein kinase UbiB">
    <location>
        <begin position="1"/>
        <end position="546"/>
    </location>
</feature>
<feature type="transmembrane region" description="Helical" evidence="1">
    <location>
        <begin position="501"/>
        <end position="521"/>
    </location>
</feature>
<feature type="transmembrane region" description="Helical" evidence="1">
    <location>
        <begin position="522"/>
        <end position="542"/>
    </location>
</feature>
<feature type="domain" description="Protein kinase" evidence="1">
    <location>
        <begin position="124"/>
        <end position="502"/>
    </location>
</feature>
<feature type="active site" description="Proton acceptor" evidence="1">
    <location>
        <position position="288"/>
    </location>
</feature>
<feature type="binding site" evidence="1">
    <location>
        <begin position="130"/>
        <end position="138"/>
    </location>
    <ligand>
        <name>ATP</name>
        <dbReference type="ChEBI" id="CHEBI:30616"/>
    </ligand>
</feature>
<feature type="binding site" evidence="1">
    <location>
        <position position="153"/>
    </location>
    <ligand>
        <name>ATP</name>
        <dbReference type="ChEBI" id="CHEBI:30616"/>
    </ligand>
</feature>
<organism>
    <name type="scientific">Escherichia coli O17:K52:H18 (strain UMN026 / ExPEC)</name>
    <dbReference type="NCBI Taxonomy" id="585056"/>
    <lineage>
        <taxon>Bacteria</taxon>
        <taxon>Pseudomonadati</taxon>
        <taxon>Pseudomonadota</taxon>
        <taxon>Gammaproteobacteria</taxon>
        <taxon>Enterobacterales</taxon>
        <taxon>Enterobacteriaceae</taxon>
        <taxon>Escherichia</taxon>
    </lineage>
</organism>
<protein>
    <recommendedName>
        <fullName evidence="1">Probable protein kinase UbiB</fullName>
        <ecNumber evidence="1">2.7.-.-</ecNumber>
    </recommendedName>
    <alternativeName>
        <fullName evidence="1">Ubiquinone biosynthesis protein UbiB</fullName>
    </alternativeName>
</protein>
<proteinExistence type="inferred from homology"/>
<comment type="function">
    <text evidence="1">Is probably a protein kinase regulator of UbiI activity which is involved in aerobic coenzyme Q (ubiquinone) biosynthesis.</text>
</comment>
<comment type="pathway">
    <text>Cofactor biosynthesis; ubiquinone biosynthesis [regulation].</text>
</comment>
<comment type="subcellular location">
    <subcellularLocation>
        <location evidence="1">Cell inner membrane</location>
        <topology evidence="1">Multi-pass membrane protein</topology>
    </subcellularLocation>
</comment>
<comment type="similarity">
    <text evidence="1">Belongs to the ABC1 family. UbiB subfamily.</text>
</comment>
<evidence type="ECO:0000255" key="1">
    <source>
        <dbReference type="HAMAP-Rule" id="MF_00414"/>
    </source>
</evidence>
<name>UBIB_ECOLU</name>
<keyword id="KW-0067">ATP-binding</keyword>
<keyword id="KW-0997">Cell inner membrane</keyword>
<keyword id="KW-1003">Cell membrane</keyword>
<keyword id="KW-0418">Kinase</keyword>
<keyword id="KW-0472">Membrane</keyword>
<keyword id="KW-0547">Nucleotide-binding</keyword>
<keyword id="KW-0808">Transferase</keyword>
<keyword id="KW-0812">Transmembrane</keyword>
<keyword id="KW-1133">Transmembrane helix</keyword>
<keyword id="KW-0831">Ubiquinone biosynthesis</keyword>
<gene>
    <name evidence="1" type="primary">ubiB</name>
    <name type="ordered locus">ECUMN_4361</name>
</gene>
<dbReference type="EC" id="2.7.-.-" evidence="1"/>
<dbReference type="EMBL" id="CU928163">
    <property type="protein sequence ID" value="CAR15494.1"/>
    <property type="molecule type" value="Genomic_DNA"/>
</dbReference>
<dbReference type="RefSeq" id="WP_000187543.1">
    <property type="nucleotide sequence ID" value="NC_011751.1"/>
</dbReference>
<dbReference type="RefSeq" id="YP_002414987.1">
    <property type="nucleotide sequence ID" value="NC_011751.1"/>
</dbReference>
<dbReference type="SMR" id="B7NFD8"/>
<dbReference type="STRING" id="585056.ECUMN_4361"/>
<dbReference type="GeneID" id="75174071"/>
<dbReference type="KEGG" id="eum:ECUMN_4361"/>
<dbReference type="PATRIC" id="fig|585056.7.peg.4529"/>
<dbReference type="HOGENOM" id="CLU_006533_0_0_6"/>
<dbReference type="UniPathway" id="UPA00232"/>
<dbReference type="Proteomes" id="UP000007097">
    <property type="component" value="Chromosome"/>
</dbReference>
<dbReference type="GO" id="GO:0005886">
    <property type="term" value="C:plasma membrane"/>
    <property type="evidence" value="ECO:0007669"/>
    <property type="project" value="UniProtKB-SubCell"/>
</dbReference>
<dbReference type="GO" id="GO:0005524">
    <property type="term" value="F:ATP binding"/>
    <property type="evidence" value="ECO:0007669"/>
    <property type="project" value="UniProtKB-KW"/>
</dbReference>
<dbReference type="GO" id="GO:0004672">
    <property type="term" value="F:protein kinase activity"/>
    <property type="evidence" value="ECO:0007669"/>
    <property type="project" value="UniProtKB-UniRule"/>
</dbReference>
<dbReference type="GO" id="GO:0010795">
    <property type="term" value="P:regulation of ubiquinone biosynthetic process"/>
    <property type="evidence" value="ECO:0007669"/>
    <property type="project" value="UniProtKB-UniRule"/>
</dbReference>
<dbReference type="GO" id="GO:0006744">
    <property type="term" value="P:ubiquinone biosynthetic process"/>
    <property type="evidence" value="ECO:0007669"/>
    <property type="project" value="UniProtKB-UniPathway"/>
</dbReference>
<dbReference type="CDD" id="cd13972">
    <property type="entry name" value="UbiB"/>
    <property type="match status" value="1"/>
</dbReference>
<dbReference type="HAMAP" id="MF_00414">
    <property type="entry name" value="UbiB"/>
    <property type="match status" value="1"/>
</dbReference>
<dbReference type="InterPro" id="IPR004147">
    <property type="entry name" value="ABC1_dom"/>
</dbReference>
<dbReference type="InterPro" id="IPR011009">
    <property type="entry name" value="Kinase-like_dom_sf"/>
</dbReference>
<dbReference type="InterPro" id="IPR010232">
    <property type="entry name" value="UbiB"/>
</dbReference>
<dbReference type="InterPro" id="IPR045308">
    <property type="entry name" value="UbiB_bact"/>
</dbReference>
<dbReference type="InterPro" id="IPR050154">
    <property type="entry name" value="UbiB_kinase"/>
</dbReference>
<dbReference type="NCBIfam" id="NF003404">
    <property type="entry name" value="PRK04750.1"/>
    <property type="match status" value="1"/>
</dbReference>
<dbReference type="NCBIfam" id="TIGR01982">
    <property type="entry name" value="UbiB"/>
    <property type="match status" value="1"/>
</dbReference>
<dbReference type="PANTHER" id="PTHR10566">
    <property type="entry name" value="CHAPERONE-ACTIVITY OF BC1 COMPLEX CABC1 -RELATED"/>
    <property type="match status" value="1"/>
</dbReference>
<dbReference type="PANTHER" id="PTHR10566:SF113">
    <property type="entry name" value="PROTEIN ACTIVITY OF BC1 COMPLEX KINASE 7, CHLOROPLASTIC"/>
    <property type="match status" value="1"/>
</dbReference>
<dbReference type="Pfam" id="PF03109">
    <property type="entry name" value="ABC1"/>
    <property type="match status" value="1"/>
</dbReference>
<dbReference type="SUPFAM" id="SSF56112">
    <property type="entry name" value="Protein kinase-like (PK-like)"/>
    <property type="match status" value="1"/>
</dbReference>
<accession>B7NFD8</accession>
<sequence length="546" mass="63187">MTPGEVRRLYFIIRTFLSYGLDELIPKMRITLPLRLWRYSLFWMPNRHKDKPLGERLRLALQELGPVWIKFGQMLSTRRDLFPPHIADQLALLQDKVAPFDGKLAKQQIEAAMGGLPVEAWFDDFEIKPLASASIAQVHTARLKSNGKEVVIKVIRPDILPVIKADLKLIYRLARWVPRLLPDGRRLRPTEVVREYEKTLIDELNLLRESANAIQLRRNFEDSPMLYIPEVYPDYCSEGMMVMERIYGIPVSDVAALEKNGTNMKLLAERGVQVFFTQVFRDSFFHADMHPGNIFVSYEHPENPKYIGIDCGIVGSLNKEDKRYLAENFIAFFNRDYRKVAELHVDSGWVPPDTNVEEFEFAIRTVCEPIFEKPLAEISFGHVLLNLFNTARRFNMEVQPQLVLLQKTLLYVEGVGRQLYPQLDLWKTAKPFLESWIKDQVGIPALVRAFKEKAPFWVEKMPELPELVYDSLRQGKYLQHSVDKIARELQSNHVRQGQSRYFLGIGATLVLSGTFLLVSRPEWGLMPGWLMAGGLIAWFVGWRKTR</sequence>
<reference key="1">
    <citation type="journal article" date="2009" name="PLoS Genet.">
        <title>Organised genome dynamics in the Escherichia coli species results in highly diverse adaptive paths.</title>
        <authorList>
            <person name="Touchon M."/>
            <person name="Hoede C."/>
            <person name="Tenaillon O."/>
            <person name="Barbe V."/>
            <person name="Baeriswyl S."/>
            <person name="Bidet P."/>
            <person name="Bingen E."/>
            <person name="Bonacorsi S."/>
            <person name="Bouchier C."/>
            <person name="Bouvet O."/>
            <person name="Calteau A."/>
            <person name="Chiapello H."/>
            <person name="Clermont O."/>
            <person name="Cruveiller S."/>
            <person name="Danchin A."/>
            <person name="Diard M."/>
            <person name="Dossat C."/>
            <person name="Karoui M.E."/>
            <person name="Frapy E."/>
            <person name="Garry L."/>
            <person name="Ghigo J.M."/>
            <person name="Gilles A.M."/>
            <person name="Johnson J."/>
            <person name="Le Bouguenec C."/>
            <person name="Lescat M."/>
            <person name="Mangenot S."/>
            <person name="Martinez-Jehanne V."/>
            <person name="Matic I."/>
            <person name="Nassif X."/>
            <person name="Oztas S."/>
            <person name="Petit M.A."/>
            <person name="Pichon C."/>
            <person name="Rouy Z."/>
            <person name="Ruf C.S."/>
            <person name="Schneider D."/>
            <person name="Tourret J."/>
            <person name="Vacherie B."/>
            <person name="Vallenet D."/>
            <person name="Medigue C."/>
            <person name="Rocha E.P.C."/>
            <person name="Denamur E."/>
        </authorList>
    </citation>
    <scope>NUCLEOTIDE SEQUENCE [LARGE SCALE GENOMIC DNA]</scope>
    <source>
        <strain>UMN026 / ExPEC</strain>
    </source>
</reference>